<evidence type="ECO:0000250" key="1"/>
<evidence type="ECO:0000255" key="2"/>
<evidence type="ECO:0000255" key="3">
    <source>
        <dbReference type="PROSITE-ProRule" id="PRU10035"/>
    </source>
</evidence>
<evidence type="ECO:0000255" key="4">
    <source>
        <dbReference type="PROSITE-ProRule" id="PRU10036"/>
    </source>
</evidence>
<evidence type="ECO:0000305" key="5"/>
<reference key="1">
    <citation type="journal article" date="2005" name="Cell. Mol. Life Sci.">
        <title>Identification and analysis of venom gland-specific genes from the coastal taipan (Oxyuranus scutellatus) and related species.</title>
        <authorList>
            <person name="St Pierre L."/>
            <person name="Woods R."/>
            <person name="Earl S.T.H."/>
            <person name="Masci P.P."/>
            <person name="Lavin M.F."/>
        </authorList>
    </citation>
    <scope>NUCLEOTIDE SEQUENCE [MRNA]</scope>
    <source>
        <tissue>Venom gland</tissue>
    </source>
</reference>
<keyword id="KW-0106">Calcium</keyword>
<keyword id="KW-1015">Disulfide bond</keyword>
<keyword id="KW-0378">Hydrolase</keyword>
<keyword id="KW-0442">Lipid degradation</keyword>
<keyword id="KW-0443">Lipid metabolism</keyword>
<keyword id="KW-0479">Metal-binding</keyword>
<keyword id="KW-0964">Secreted</keyword>
<keyword id="KW-0732">Signal</keyword>
<keyword id="KW-0800">Toxin</keyword>
<accession>Q45Z25</accession>
<feature type="signal peptide" evidence="2">
    <location>
        <begin position="1"/>
        <end position="27"/>
    </location>
</feature>
<feature type="chain" id="PRO_0000043281" description="Acidic phospholipase A2 6">
    <location>
        <begin position="28"/>
        <end position="151"/>
    </location>
</feature>
<feature type="active site" evidence="1">
    <location>
        <position position="75"/>
    </location>
</feature>
<feature type="active site" evidence="1">
    <location>
        <position position="126"/>
    </location>
</feature>
<feature type="binding site" evidence="1">
    <location>
        <position position="55"/>
    </location>
    <ligand>
        <name>Ca(2+)</name>
        <dbReference type="ChEBI" id="CHEBI:29108"/>
    </ligand>
</feature>
<feature type="binding site" evidence="1">
    <location>
        <position position="57"/>
    </location>
    <ligand>
        <name>Ca(2+)</name>
        <dbReference type="ChEBI" id="CHEBI:29108"/>
    </ligand>
</feature>
<feature type="binding site" evidence="1">
    <location>
        <position position="59"/>
    </location>
    <ligand>
        <name>Ca(2+)</name>
        <dbReference type="ChEBI" id="CHEBI:29108"/>
    </ligand>
</feature>
<feature type="binding site" evidence="1">
    <location>
        <position position="76"/>
    </location>
    <ligand>
        <name>Ca(2+)</name>
        <dbReference type="ChEBI" id="CHEBI:29108"/>
    </ligand>
</feature>
<feature type="disulfide bond" evidence="1">
    <location>
        <begin position="38"/>
        <end position="104"/>
    </location>
</feature>
<feature type="disulfide bond" evidence="1">
    <location>
        <begin position="54"/>
        <end position="151"/>
    </location>
</feature>
<feature type="disulfide bond" evidence="1">
    <location>
        <begin position="56"/>
        <end position="72"/>
    </location>
</feature>
<feature type="disulfide bond" evidence="1">
    <location>
        <begin position="71"/>
        <end position="132"/>
    </location>
</feature>
<feature type="disulfide bond" evidence="1">
    <location>
        <begin position="78"/>
        <end position="125"/>
    </location>
</feature>
<feature type="disulfide bond" evidence="1">
    <location>
        <begin position="88"/>
        <end position="118"/>
    </location>
</feature>
<feature type="disulfide bond" evidence="1">
    <location>
        <begin position="111"/>
        <end position="123"/>
    </location>
</feature>
<comment type="function">
    <text>PLA2 catalyzes the calcium-dependent hydrolysis of the 2-acyl groups in 3-sn-phosphoglycerides.</text>
</comment>
<comment type="catalytic activity">
    <reaction evidence="3 4">
        <text>a 1,2-diacyl-sn-glycero-3-phosphocholine + H2O = a 1-acyl-sn-glycero-3-phosphocholine + a fatty acid + H(+)</text>
        <dbReference type="Rhea" id="RHEA:15801"/>
        <dbReference type="ChEBI" id="CHEBI:15377"/>
        <dbReference type="ChEBI" id="CHEBI:15378"/>
        <dbReference type="ChEBI" id="CHEBI:28868"/>
        <dbReference type="ChEBI" id="CHEBI:57643"/>
        <dbReference type="ChEBI" id="CHEBI:58168"/>
        <dbReference type="EC" id="3.1.1.4"/>
    </reaction>
</comment>
<comment type="cofactor">
    <cofactor evidence="1">
        <name>Ca(2+)</name>
        <dbReference type="ChEBI" id="CHEBI:29108"/>
    </cofactor>
    <text evidence="1">Binds 1 Ca(2+) ion.</text>
</comment>
<comment type="subcellular location">
    <subcellularLocation>
        <location>Secreted</location>
    </subcellularLocation>
</comment>
<comment type="tissue specificity">
    <text>Expressed by the venom gland.</text>
</comment>
<comment type="similarity">
    <text evidence="5">Belongs to the phospholipase A2 family. Group I subfamily. D49 sub-subfamily.</text>
</comment>
<dbReference type="EC" id="3.1.1.4"/>
<dbReference type="EMBL" id="DQ085841">
    <property type="protein sequence ID" value="AAZ22659.1"/>
    <property type="molecule type" value="mRNA"/>
</dbReference>
<dbReference type="SMR" id="Q45Z25"/>
<dbReference type="GO" id="GO:0005576">
    <property type="term" value="C:extracellular region"/>
    <property type="evidence" value="ECO:0007669"/>
    <property type="project" value="UniProtKB-SubCell"/>
</dbReference>
<dbReference type="GO" id="GO:0005509">
    <property type="term" value="F:calcium ion binding"/>
    <property type="evidence" value="ECO:0007669"/>
    <property type="project" value="InterPro"/>
</dbReference>
<dbReference type="GO" id="GO:0047498">
    <property type="term" value="F:calcium-dependent phospholipase A2 activity"/>
    <property type="evidence" value="ECO:0007669"/>
    <property type="project" value="TreeGrafter"/>
</dbReference>
<dbReference type="GO" id="GO:0005543">
    <property type="term" value="F:phospholipid binding"/>
    <property type="evidence" value="ECO:0007669"/>
    <property type="project" value="TreeGrafter"/>
</dbReference>
<dbReference type="GO" id="GO:0005102">
    <property type="term" value="F:signaling receptor binding"/>
    <property type="evidence" value="ECO:0007669"/>
    <property type="project" value="TreeGrafter"/>
</dbReference>
<dbReference type="GO" id="GO:0090729">
    <property type="term" value="F:toxin activity"/>
    <property type="evidence" value="ECO:0007669"/>
    <property type="project" value="UniProtKB-KW"/>
</dbReference>
<dbReference type="GO" id="GO:0050482">
    <property type="term" value="P:arachidonate secretion"/>
    <property type="evidence" value="ECO:0007669"/>
    <property type="project" value="InterPro"/>
</dbReference>
<dbReference type="GO" id="GO:0006633">
    <property type="term" value="P:fatty acid biosynthetic process"/>
    <property type="evidence" value="ECO:0007669"/>
    <property type="project" value="TreeGrafter"/>
</dbReference>
<dbReference type="GO" id="GO:0016042">
    <property type="term" value="P:lipid catabolic process"/>
    <property type="evidence" value="ECO:0007669"/>
    <property type="project" value="UniProtKB-KW"/>
</dbReference>
<dbReference type="GO" id="GO:0006644">
    <property type="term" value="P:phospholipid metabolic process"/>
    <property type="evidence" value="ECO:0007669"/>
    <property type="project" value="InterPro"/>
</dbReference>
<dbReference type="GO" id="GO:0048146">
    <property type="term" value="P:positive regulation of fibroblast proliferation"/>
    <property type="evidence" value="ECO:0007669"/>
    <property type="project" value="TreeGrafter"/>
</dbReference>
<dbReference type="CDD" id="cd00125">
    <property type="entry name" value="PLA2c"/>
    <property type="match status" value="1"/>
</dbReference>
<dbReference type="FunFam" id="1.20.90.10:FF:000007">
    <property type="entry name" value="Acidic phospholipase A2"/>
    <property type="match status" value="1"/>
</dbReference>
<dbReference type="Gene3D" id="1.20.90.10">
    <property type="entry name" value="Phospholipase A2 domain"/>
    <property type="match status" value="1"/>
</dbReference>
<dbReference type="InterPro" id="IPR001211">
    <property type="entry name" value="PLipase_A2"/>
</dbReference>
<dbReference type="InterPro" id="IPR033112">
    <property type="entry name" value="PLipase_A2_Asp_AS"/>
</dbReference>
<dbReference type="InterPro" id="IPR016090">
    <property type="entry name" value="PLipase_A2_dom"/>
</dbReference>
<dbReference type="InterPro" id="IPR036444">
    <property type="entry name" value="PLipase_A2_dom_sf"/>
</dbReference>
<dbReference type="InterPro" id="IPR033113">
    <property type="entry name" value="PLipase_A2_His_AS"/>
</dbReference>
<dbReference type="PANTHER" id="PTHR11716:SF94">
    <property type="entry name" value="PHOSPHOLIPASE A2"/>
    <property type="match status" value="1"/>
</dbReference>
<dbReference type="PANTHER" id="PTHR11716">
    <property type="entry name" value="PHOSPHOLIPASE A2 FAMILY MEMBER"/>
    <property type="match status" value="1"/>
</dbReference>
<dbReference type="Pfam" id="PF00068">
    <property type="entry name" value="Phospholip_A2_1"/>
    <property type="match status" value="1"/>
</dbReference>
<dbReference type="PRINTS" id="PR00389">
    <property type="entry name" value="PHPHLIPASEA2"/>
</dbReference>
<dbReference type="SMART" id="SM00085">
    <property type="entry name" value="PA2c"/>
    <property type="match status" value="1"/>
</dbReference>
<dbReference type="SUPFAM" id="SSF48619">
    <property type="entry name" value="Phospholipase A2, PLA2"/>
    <property type="match status" value="1"/>
</dbReference>
<dbReference type="PROSITE" id="PS00119">
    <property type="entry name" value="PA2_ASP"/>
    <property type="match status" value="1"/>
</dbReference>
<dbReference type="PROSITE" id="PS00118">
    <property type="entry name" value="PA2_HIS"/>
    <property type="match status" value="1"/>
</dbReference>
<proteinExistence type="evidence at transcript level"/>
<protein>
    <recommendedName>
        <fullName>Acidic phospholipase A2 6</fullName>
        <shortName>svPLA2</shortName>
        <ecNumber>3.1.1.4</ecNumber>
    </recommendedName>
    <alternativeName>
        <fullName>Phosphatidylcholine 2-acylhydrolase 6</fullName>
        <shortName>PLA-6</shortName>
    </alternativeName>
</protein>
<sequence>MYPAHLLVLLAVCVSLLGAASIPARPLNLYQFGNMIQCANHGRRPTWHYMDYGCYCGKGGSGTPVDELDRCCQIHDDCYGEAEKLPACNYMMSGPYYNTYSYECNEGELTCKDNNDECKAFICNCDRTAAICFARTPYNDANWNIDTKTRC</sequence>
<name>PA2A6_TROCA</name>
<organism>
    <name type="scientific">Tropidechis carinatus</name>
    <name type="common">Australian rough-scaled snake</name>
    <dbReference type="NCBI Taxonomy" id="100989"/>
    <lineage>
        <taxon>Eukaryota</taxon>
        <taxon>Metazoa</taxon>
        <taxon>Chordata</taxon>
        <taxon>Craniata</taxon>
        <taxon>Vertebrata</taxon>
        <taxon>Euteleostomi</taxon>
        <taxon>Lepidosauria</taxon>
        <taxon>Squamata</taxon>
        <taxon>Bifurcata</taxon>
        <taxon>Unidentata</taxon>
        <taxon>Episquamata</taxon>
        <taxon>Toxicofera</taxon>
        <taxon>Serpentes</taxon>
        <taxon>Colubroidea</taxon>
        <taxon>Elapidae</taxon>
        <taxon>Notechinae</taxon>
        <taxon>Tropidechis</taxon>
    </lineage>
</organism>